<name>ATPA_STRPI</name>
<accession>B1ICT1</accession>
<organism>
    <name type="scientific">Streptococcus pneumoniae (strain Hungary19A-6)</name>
    <dbReference type="NCBI Taxonomy" id="487214"/>
    <lineage>
        <taxon>Bacteria</taxon>
        <taxon>Bacillati</taxon>
        <taxon>Bacillota</taxon>
        <taxon>Bacilli</taxon>
        <taxon>Lactobacillales</taxon>
        <taxon>Streptococcaceae</taxon>
        <taxon>Streptococcus</taxon>
    </lineage>
</organism>
<feature type="chain" id="PRO_1000143444" description="ATP synthase subunit alpha">
    <location>
        <begin position="1"/>
        <end position="501"/>
    </location>
</feature>
<feature type="binding site" evidence="1">
    <location>
        <begin position="169"/>
        <end position="176"/>
    </location>
    <ligand>
        <name>ATP</name>
        <dbReference type="ChEBI" id="CHEBI:30616"/>
    </ligand>
</feature>
<feature type="site" description="Required for activity" evidence="1">
    <location>
        <position position="362"/>
    </location>
</feature>
<sequence>MAINAQEISALIKQQIENFKPNFDVTETGVVTYIGDGIARAHGLENAMSGELLNFENGSYGMAQNLESTDVGIIILGDFTDIREGDTIRRTGKIMEVPVGESLIGRVVDPLGRPVDGLGEIHTDKTRPVEAPAPGVMQRKSVSEPLQTGLKAIDALVPIGRGQRELIIGDRQTGKTTIAIDTILNQKDQDMICIYVAIGQKESTVRTQVETLRQYGALDYTIVVTASASQPSPLLFLAPYAGVAMAEEFMYQGKHVLIVYDDLSKQAVAYRELSLLLRRPPGREAFPGDVFYLHSRLLERSAKVSDELGGGSITALPFIETQAGDISAYIATNVISITDGQIFLGDGLFNAGIRPAIDAGSSVSRVGGSAQIKAMKKVAGTLRIDLASYRELEAFTKFGSDLDAATQAKLNRGRRTVEVLKQPVHKPLPVEKQVTILYALTHGFLDTVPVDDIVRFEEEFHAFFDAQHPEILETIRDTKDLPEEAVLDAAITEFLNQSSFQ</sequence>
<proteinExistence type="inferred from homology"/>
<dbReference type="EC" id="7.1.2.2" evidence="1"/>
<dbReference type="EMBL" id="CP000936">
    <property type="protein sequence ID" value="ACA36533.1"/>
    <property type="molecule type" value="Genomic_DNA"/>
</dbReference>
<dbReference type="RefSeq" id="WP_000996636.1">
    <property type="nucleotide sequence ID" value="NC_010380.1"/>
</dbReference>
<dbReference type="SMR" id="B1ICT1"/>
<dbReference type="KEGG" id="spv:SPH_1621"/>
<dbReference type="HOGENOM" id="CLU_010091_2_1_9"/>
<dbReference type="Proteomes" id="UP000002163">
    <property type="component" value="Chromosome"/>
</dbReference>
<dbReference type="GO" id="GO:0005886">
    <property type="term" value="C:plasma membrane"/>
    <property type="evidence" value="ECO:0007669"/>
    <property type="project" value="UniProtKB-SubCell"/>
</dbReference>
<dbReference type="GO" id="GO:0045259">
    <property type="term" value="C:proton-transporting ATP synthase complex"/>
    <property type="evidence" value="ECO:0007669"/>
    <property type="project" value="UniProtKB-KW"/>
</dbReference>
<dbReference type="GO" id="GO:0043531">
    <property type="term" value="F:ADP binding"/>
    <property type="evidence" value="ECO:0007669"/>
    <property type="project" value="TreeGrafter"/>
</dbReference>
<dbReference type="GO" id="GO:0005524">
    <property type="term" value="F:ATP binding"/>
    <property type="evidence" value="ECO:0007669"/>
    <property type="project" value="UniProtKB-UniRule"/>
</dbReference>
<dbReference type="GO" id="GO:0046933">
    <property type="term" value="F:proton-transporting ATP synthase activity, rotational mechanism"/>
    <property type="evidence" value="ECO:0007669"/>
    <property type="project" value="UniProtKB-UniRule"/>
</dbReference>
<dbReference type="CDD" id="cd18113">
    <property type="entry name" value="ATP-synt_F1_alpha_C"/>
    <property type="match status" value="1"/>
</dbReference>
<dbReference type="CDD" id="cd18116">
    <property type="entry name" value="ATP-synt_F1_alpha_N"/>
    <property type="match status" value="1"/>
</dbReference>
<dbReference type="CDD" id="cd01132">
    <property type="entry name" value="F1-ATPase_alpha_CD"/>
    <property type="match status" value="1"/>
</dbReference>
<dbReference type="FunFam" id="1.20.150.20:FF:000001">
    <property type="entry name" value="ATP synthase subunit alpha"/>
    <property type="match status" value="1"/>
</dbReference>
<dbReference type="FunFam" id="2.40.30.20:FF:000001">
    <property type="entry name" value="ATP synthase subunit alpha"/>
    <property type="match status" value="1"/>
</dbReference>
<dbReference type="FunFam" id="3.40.50.300:FF:000002">
    <property type="entry name" value="ATP synthase subunit alpha"/>
    <property type="match status" value="1"/>
</dbReference>
<dbReference type="Gene3D" id="2.40.30.20">
    <property type="match status" value="1"/>
</dbReference>
<dbReference type="Gene3D" id="1.20.150.20">
    <property type="entry name" value="ATP synthase alpha/beta chain, C-terminal domain"/>
    <property type="match status" value="1"/>
</dbReference>
<dbReference type="Gene3D" id="3.40.50.300">
    <property type="entry name" value="P-loop containing nucleotide triphosphate hydrolases"/>
    <property type="match status" value="1"/>
</dbReference>
<dbReference type="HAMAP" id="MF_01346">
    <property type="entry name" value="ATP_synth_alpha_bact"/>
    <property type="match status" value="1"/>
</dbReference>
<dbReference type="InterPro" id="IPR023366">
    <property type="entry name" value="ATP_synth_asu-like_sf"/>
</dbReference>
<dbReference type="InterPro" id="IPR000793">
    <property type="entry name" value="ATP_synth_asu_C"/>
</dbReference>
<dbReference type="InterPro" id="IPR038376">
    <property type="entry name" value="ATP_synth_asu_C_sf"/>
</dbReference>
<dbReference type="InterPro" id="IPR033732">
    <property type="entry name" value="ATP_synth_F1_a_nt-bd_dom"/>
</dbReference>
<dbReference type="InterPro" id="IPR005294">
    <property type="entry name" value="ATP_synth_F1_asu"/>
</dbReference>
<dbReference type="InterPro" id="IPR004100">
    <property type="entry name" value="ATPase_F1/V1/A1_a/bsu_N"/>
</dbReference>
<dbReference type="InterPro" id="IPR036121">
    <property type="entry name" value="ATPase_F1/V1/A1_a/bsu_N_sf"/>
</dbReference>
<dbReference type="InterPro" id="IPR000194">
    <property type="entry name" value="ATPase_F1/V1/A1_a/bsu_nucl-bd"/>
</dbReference>
<dbReference type="InterPro" id="IPR027417">
    <property type="entry name" value="P-loop_NTPase"/>
</dbReference>
<dbReference type="NCBIfam" id="TIGR00962">
    <property type="entry name" value="atpA"/>
    <property type="match status" value="1"/>
</dbReference>
<dbReference type="NCBIfam" id="NF009884">
    <property type="entry name" value="PRK13343.1"/>
    <property type="match status" value="1"/>
</dbReference>
<dbReference type="PANTHER" id="PTHR48082">
    <property type="entry name" value="ATP SYNTHASE SUBUNIT ALPHA, MITOCHONDRIAL"/>
    <property type="match status" value="1"/>
</dbReference>
<dbReference type="PANTHER" id="PTHR48082:SF2">
    <property type="entry name" value="ATP SYNTHASE SUBUNIT ALPHA, MITOCHONDRIAL"/>
    <property type="match status" value="1"/>
</dbReference>
<dbReference type="Pfam" id="PF00006">
    <property type="entry name" value="ATP-synt_ab"/>
    <property type="match status" value="1"/>
</dbReference>
<dbReference type="Pfam" id="PF00306">
    <property type="entry name" value="ATP-synt_ab_C"/>
    <property type="match status" value="1"/>
</dbReference>
<dbReference type="Pfam" id="PF02874">
    <property type="entry name" value="ATP-synt_ab_N"/>
    <property type="match status" value="1"/>
</dbReference>
<dbReference type="PIRSF" id="PIRSF039088">
    <property type="entry name" value="F_ATPase_subunit_alpha"/>
    <property type="match status" value="1"/>
</dbReference>
<dbReference type="SUPFAM" id="SSF47917">
    <property type="entry name" value="C-terminal domain of alpha and beta subunits of F1 ATP synthase"/>
    <property type="match status" value="1"/>
</dbReference>
<dbReference type="SUPFAM" id="SSF50615">
    <property type="entry name" value="N-terminal domain of alpha and beta subunits of F1 ATP synthase"/>
    <property type="match status" value="1"/>
</dbReference>
<dbReference type="SUPFAM" id="SSF52540">
    <property type="entry name" value="P-loop containing nucleoside triphosphate hydrolases"/>
    <property type="match status" value="1"/>
</dbReference>
<reference key="1">
    <citation type="journal article" date="2010" name="Genome Biol.">
        <title>Structure and dynamics of the pan-genome of Streptococcus pneumoniae and closely related species.</title>
        <authorList>
            <person name="Donati C."/>
            <person name="Hiller N.L."/>
            <person name="Tettelin H."/>
            <person name="Muzzi A."/>
            <person name="Croucher N.J."/>
            <person name="Angiuoli S.V."/>
            <person name="Oggioni M."/>
            <person name="Dunning Hotopp J.C."/>
            <person name="Hu F.Z."/>
            <person name="Riley D.R."/>
            <person name="Covacci A."/>
            <person name="Mitchell T.J."/>
            <person name="Bentley S.D."/>
            <person name="Kilian M."/>
            <person name="Ehrlich G.D."/>
            <person name="Rappuoli R."/>
            <person name="Moxon E.R."/>
            <person name="Masignani V."/>
        </authorList>
    </citation>
    <scope>NUCLEOTIDE SEQUENCE [LARGE SCALE GENOMIC DNA]</scope>
    <source>
        <strain>Hungary19A-6</strain>
    </source>
</reference>
<evidence type="ECO:0000255" key="1">
    <source>
        <dbReference type="HAMAP-Rule" id="MF_01346"/>
    </source>
</evidence>
<protein>
    <recommendedName>
        <fullName evidence="1">ATP synthase subunit alpha</fullName>
        <ecNumber evidence="1">7.1.2.2</ecNumber>
    </recommendedName>
    <alternativeName>
        <fullName evidence="1">ATP synthase F1 sector subunit alpha</fullName>
    </alternativeName>
    <alternativeName>
        <fullName evidence="1">F-ATPase subunit alpha</fullName>
    </alternativeName>
</protein>
<keyword id="KW-0066">ATP synthesis</keyword>
<keyword id="KW-0067">ATP-binding</keyword>
<keyword id="KW-1003">Cell membrane</keyword>
<keyword id="KW-0139">CF(1)</keyword>
<keyword id="KW-0375">Hydrogen ion transport</keyword>
<keyword id="KW-0406">Ion transport</keyword>
<keyword id="KW-0472">Membrane</keyword>
<keyword id="KW-0547">Nucleotide-binding</keyword>
<keyword id="KW-1278">Translocase</keyword>
<keyword id="KW-0813">Transport</keyword>
<gene>
    <name evidence="1" type="primary">atpA</name>
    <name type="ordered locus">SPH_1621</name>
</gene>
<comment type="function">
    <text evidence="1">Produces ATP from ADP in the presence of a proton gradient across the membrane. The alpha chain is a regulatory subunit.</text>
</comment>
<comment type="catalytic activity">
    <reaction evidence="1">
        <text>ATP + H2O + 4 H(+)(in) = ADP + phosphate + 5 H(+)(out)</text>
        <dbReference type="Rhea" id="RHEA:57720"/>
        <dbReference type="ChEBI" id="CHEBI:15377"/>
        <dbReference type="ChEBI" id="CHEBI:15378"/>
        <dbReference type="ChEBI" id="CHEBI:30616"/>
        <dbReference type="ChEBI" id="CHEBI:43474"/>
        <dbReference type="ChEBI" id="CHEBI:456216"/>
        <dbReference type="EC" id="7.1.2.2"/>
    </reaction>
</comment>
<comment type="subunit">
    <text evidence="1">F-type ATPases have 2 components, CF(1) - the catalytic core - and CF(0) - the membrane proton channel. CF(1) has five subunits: alpha(3), beta(3), gamma(1), delta(1), epsilon(1). CF(0) has three main subunits: a(1), b(2) and c(9-12). The alpha and beta chains form an alternating ring which encloses part of the gamma chain. CF(1) is attached to CF(0) by a central stalk formed by the gamma and epsilon chains, while a peripheral stalk is formed by the delta and b chains.</text>
</comment>
<comment type="subcellular location">
    <subcellularLocation>
        <location evidence="1">Cell membrane</location>
        <topology evidence="1">Peripheral membrane protein</topology>
    </subcellularLocation>
</comment>
<comment type="similarity">
    <text evidence="1">Belongs to the ATPase alpha/beta chains family.</text>
</comment>